<name>NUDL_ECOUT</name>
<proteinExistence type="inferred from homology"/>
<feature type="chain" id="PRO_0000315572" description="Uncharacterized Nudix hydrolase NudL">
    <location>
        <begin position="1"/>
        <end position="192"/>
    </location>
</feature>
<feature type="domain" description="Nudix hydrolase" evidence="1">
    <location>
        <begin position="29"/>
        <end position="160"/>
    </location>
</feature>
<feature type="short sequence motif" description="Nudix box">
    <location>
        <begin position="67"/>
        <end position="89"/>
    </location>
</feature>
<feature type="binding site" evidence="1">
    <location>
        <position position="83"/>
    </location>
    <ligand>
        <name>Mg(2+)</name>
        <dbReference type="ChEBI" id="CHEBI:18420"/>
    </ligand>
</feature>
<feature type="binding site" evidence="1">
    <location>
        <position position="87"/>
    </location>
    <ligand>
        <name>Mg(2+)</name>
        <dbReference type="ChEBI" id="CHEBI:18420"/>
    </ligand>
</feature>
<organism>
    <name type="scientific">Escherichia coli (strain UTI89 / UPEC)</name>
    <dbReference type="NCBI Taxonomy" id="364106"/>
    <lineage>
        <taxon>Bacteria</taxon>
        <taxon>Pseudomonadati</taxon>
        <taxon>Pseudomonadota</taxon>
        <taxon>Gammaproteobacteria</taxon>
        <taxon>Enterobacterales</taxon>
        <taxon>Enterobacteriaceae</taxon>
        <taxon>Escherichia</taxon>
    </lineage>
</organism>
<protein>
    <recommendedName>
        <fullName evidence="1">Uncharacterized Nudix hydrolase NudL</fullName>
        <ecNumber evidence="1">3.6.1.-</ecNumber>
    </recommendedName>
</protein>
<dbReference type="EC" id="3.6.1.-" evidence="1"/>
<dbReference type="EMBL" id="CP000243">
    <property type="protein sequence ID" value="ABE07485.1"/>
    <property type="molecule type" value="Genomic_DNA"/>
</dbReference>
<dbReference type="RefSeq" id="WP_000456725.1">
    <property type="nucleotide sequence ID" value="NZ_CP064825.1"/>
</dbReference>
<dbReference type="SMR" id="Q1RAX9"/>
<dbReference type="KEGG" id="eci:UTI89_C2009"/>
<dbReference type="HOGENOM" id="CLU_040940_5_2_6"/>
<dbReference type="Proteomes" id="UP000001952">
    <property type="component" value="Chromosome"/>
</dbReference>
<dbReference type="GO" id="GO:0010945">
    <property type="term" value="F:coenzyme A diphosphatase activity"/>
    <property type="evidence" value="ECO:0007669"/>
    <property type="project" value="InterPro"/>
</dbReference>
<dbReference type="GO" id="GO:0000287">
    <property type="term" value="F:magnesium ion binding"/>
    <property type="evidence" value="ECO:0007669"/>
    <property type="project" value="UniProtKB-UniRule"/>
</dbReference>
<dbReference type="GO" id="GO:0030145">
    <property type="term" value="F:manganese ion binding"/>
    <property type="evidence" value="ECO:0007669"/>
    <property type="project" value="UniProtKB-UniRule"/>
</dbReference>
<dbReference type="GO" id="GO:0009132">
    <property type="term" value="P:nucleoside diphosphate metabolic process"/>
    <property type="evidence" value="ECO:0007669"/>
    <property type="project" value="InterPro"/>
</dbReference>
<dbReference type="CDD" id="cd03426">
    <property type="entry name" value="NUDIX_CoAse_Nudt7"/>
    <property type="match status" value="1"/>
</dbReference>
<dbReference type="FunFam" id="3.90.79.10:FF:000013">
    <property type="entry name" value="Uncharacterized Nudix hydrolase NudL"/>
    <property type="match status" value="1"/>
</dbReference>
<dbReference type="Gene3D" id="3.90.79.10">
    <property type="entry name" value="Nucleoside Triphosphate Pyrophosphohydrolase"/>
    <property type="match status" value="1"/>
</dbReference>
<dbReference type="HAMAP" id="MF_01592">
    <property type="entry name" value="Nudix_NudL"/>
    <property type="match status" value="1"/>
</dbReference>
<dbReference type="InterPro" id="IPR045121">
    <property type="entry name" value="CoAse"/>
</dbReference>
<dbReference type="InterPro" id="IPR015797">
    <property type="entry name" value="NUDIX_hydrolase-like_dom_sf"/>
</dbReference>
<dbReference type="InterPro" id="IPR000086">
    <property type="entry name" value="NUDIX_hydrolase_dom"/>
</dbReference>
<dbReference type="InterPro" id="IPR000059">
    <property type="entry name" value="NUDIX_hydrolase_NudL_CS"/>
</dbReference>
<dbReference type="InterPro" id="IPR023735">
    <property type="entry name" value="Nudix_NudL"/>
</dbReference>
<dbReference type="NCBIfam" id="NF007980">
    <property type="entry name" value="PRK10707.1"/>
    <property type="match status" value="1"/>
</dbReference>
<dbReference type="PANTHER" id="PTHR12992:SF11">
    <property type="entry name" value="MITOCHONDRIAL COENZYME A DIPHOSPHATASE NUDT8"/>
    <property type="match status" value="1"/>
</dbReference>
<dbReference type="PANTHER" id="PTHR12992">
    <property type="entry name" value="NUDIX HYDROLASE"/>
    <property type="match status" value="1"/>
</dbReference>
<dbReference type="Pfam" id="PF00293">
    <property type="entry name" value="NUDIX"/>
    <property type="match status" value="1"/>
</dbReference>
<dbReference type="SUPFAM" id="SSF55811">
    <property type="entry name" value="Nudix"/>
    <property type="match status" value="1"/>
</dbReference>
<dbReference type="PROSITE" id="PS51462">
    <property type="entry name" value="NUDIX"/>
    <property type="match status" value="1"/>
</dbReference>
<dbReference type="PROSITE" id="PS01293">
    <property type="entry name" value="NUDIX_COA"/>
    <property type="match status" value="1"/>
</dbReference>
<sequence>MEYRSLTLDDFLSRFQLLRPQINRETLNHRQAAVLIPIVRRPQPGLLLTQRSIHLRKHAGQVAFPGGAVDDTDASVIAAALREAEEEVAIPPSAVEVIGVLPPVDSVTGYQVTPVVGIIPPDLPYRASEDEVSAVFEMPLAQALHLGRYHPLDIYRRGDSHRVWLSWYEQYFVWGMTAGIIRELALQIGVKP</sequence>
<accession>Q1RAX9</accession>
<evidence type="ECO:0000255" key="1">
    <source>
        <dbReference type="HAMAP-Rule" id="MF_01592"/>
    </source>
</evidence>
<gene>
    <name evidence="1" type="primary">nudL</name>
    <name type="ordered locus">UTI89_C2009</name>
</gene>
<keyword id="KW-0378">Hydrolase</keyword>
<keyword id="KW-0460">Magnesium</keyword>
<keyword id="KW-0464">Manganese</keyword>
<keyword id="KW-0479">Metal-binding</keyword>
<comment type="function">
    <text evidence="1">Probably mediates the hydrolysis of some nucleoside diphosphate derivatives.</text>
</comment>
<comment type="cofactor">
    <cofactor evidence="1">
        <name>Mn(2+)</name>
        <dbReference type="ChEBI" id="CHEBI:29035"/>
    </cofactor>
    <cofactor evidence="1">
        <name>Mg(2+)</name>
        <dbReference type="ChEBI" id="CHEBI:18420"/>
    </cofactor>
</comment>
<comment type="similarity">
    <text evidence="1">Belongs to the Nudix hydrolase family. PCD1 subfamily.</text>
</comment>
<reference key="1">
    <citation type="journal article" date="2006" name="Proc. Natl. Acad. Sci. U.S.A.">
        <title>Identification of genes subject to positive selection in uropathogenic strains of Escherichia coli: a comparative genomics approach.</title>
        <authorList>
            <person name="Chen S.L."/>
            <person name="Hung C.-S."/>
            <person name="Xu J."/>
            <person name="Reigstad C.S."/>
            <person name="Magrini V."/>
            <person name="Sabo A."/>
            <person name="Blasiar D."/>
            <person name="Bieri T."/>
            <person name="Meyer R.R."/>
            <person name="Ozersky P."/>
            <person name="Armstrong J.R."/>
            <person name="Fulton R.S."/>
            <person name="Latreille J.P."/>
            <person name="Spieth J."/>
            <person name="Hooton T.M."/>
            <person name="Mardis E.R."/>
            <person name="Hultgren S.J."/>
            <person name="Gordon J.I."/>
        </authorList>
    </citation>
    <scope>NUCLEOTIDE SEQUENCE [LARGE SCALE GENOMIC DNA]</scope>
    <source>
        <strain>UTI89 / UPEC</strain>
    </source>
</reference>